<gene>
    <name type="primary">FAM180A</name>
    <name type="ORF">UNQ1940/PRO4423</name>
</gene>
<protein>
    <recommendedName>
        <fullName>Protein FAM180A</fullName>
    </recommendedName>
</protein>
<feature type="signal peptide" evidence="1">
    <location>
        <begin position="1"/>
        <end position="17"/>
    </location>
</feature>
<feature type="chain" id="PRO_0000317516" description="Protein FAM180A">
    <location>
        <begin position="18"/>
        <end position="173"/>
    </location>
</feature>
<feature type="sequence variant" id="VAR_054081" description="In dbSNP:rs3112374.">
    <original>V</original>
    <variation>I</variation>
    <location>
        <position position="96"/>
    </location>
</feature>
<sequence>MHWKMLLLLLLYYNAEASMCHRWSRAVLFPAAHRPKRSSSLPLNPVLQTSLEEVELLYEFLLAELEISPDLQISIKDEELASLRKASDFRTVCNNVIPKSIPDIRRLSASLSSHPGILKKEDFERTVLTLAYTAYRTALSHGHQKDIWAQSLVSLFQALRHDLMRSSQPGVPP</sequence>
<keyword id="KW-1267">Proteomics identification</keyword>
<keyword id="KW-1185">Reference proteome</keyword>
<keyword id="KW-0964">Secreted</keyword>
<keyword id="KW-0732">Signal</keyword>
<name>F180A_HUMAN</name>
<reference key="1">
    <citation type="journal article" date="2003" name="Genome Res.">
        <title>The secreted protein discovery initiative (SPDI), a large-scale effort to identify novel human secreted and transmembrane proteins: a bioinformatics assessment.</title>
        <authorList>
            <person name="Clark H.F."/>
            <person name="Gurney A.L."/>
            <person name="Abaya E."/>
            <person name="Baker K."/>
            <person name="Baldwin D.T."/>
            <person name="Brush J."/>
            <person name="Chen J."/>
            <person name="Chow B."/>
            <person name="Chui C."/>
            <person name="Crowley C."/>
            <person name="Currell B."/>
            <person name="Deuel B."/>
            <person name="Dowd P."/>
            <person name="Eaton D."/>
            <person name="Foster J.S."/>
            <person name="Grimaldi C."/>
            <person name="Gu Q."/>
            <person name="Hass P.E."/>
            <person name="Heldens S."/>
            <person name="Huang A."/>
            <person name="Kim H.S."/>
            <person name="Klimowski L."/>
            <person name="Jin Y."/>
            <person name="Johnson S."/>
            <person name="Lee J."/>
            <person name="Lewis L."/>
            <person name="Liao D."/>
            <person name="Mark M.R."/>
            <person name="Robbie E."/>
            <person name="Sanchez C."/>
            <person name="Schoenfeld J."/>
            <person name="Seshagiri S."/>
            <person name="Simmons L."/>
            <person name="Singh J."/>
            <person name="Smith V."/>
            <person name="Stinson J."/>
            <person name="Vagts A."/>
            <person name="Vandlen R.L."/>
            <person name="Watanabe C."/>
            <person name="Wieand D."/>
            <person name="Woods K."/>
            <person name="Xie M.-H."/>
            <person name="Yansura D.G."/>
            <person name="Yi S."/>
            <person name="Yu G."/>
            <person name="Yuan J."/>
            <person name="Zhang M."/>
            <person name="Zhang Z."/>
            <person name="Goddard A.D."/>
            <person name="Wood W.I."/>
            <person name="Godowski P.J."/>
            <person name="Gray A.M."/>
        </authorList>
    </citation>
    <scope>NUCLEOTIDE SEQUENCE [LARGE SCALE MRNA]</scope>
</reference>
<reference key="2">
    <citation type="journal article" date="2004" name="Nat. Genet.">
        <title>Complete sequencing and characterization of 21,243 full-length human cDNAs.</title>
        <authorList>
            <person name="Ota T."/>
            <person name="Suzuki Y."/>
            <person name="Nishikawa T."/>
            <person name="Otsuki T."/>
            <person name="Sugiyama T."/>
            <person name="Irie R."/>
            <person name="Wakamatsu A."/>
            <person name="Hayashi K."/>
            <person name="Sato H."/>
            <person name="Nagai K."/>
            <person name="Kimura K."/>
            <person name="Makita H."/>
            <person name="Sekine M."/>
            <person name="Obayashi M."/>
            <person name="Nishi T."/>
            <person name="Shibahara T."/>
            <person name="Tanaka T."/>
            <person name="Ishii S."/>
            <person name="Yamamoto J."/>
            <person name="Saito K."/>
            <person name="Kawai Y."/>
            <person name="Isono Y."/>
            <person name="Nakamura Y."/>
            <person name="Nagahari K."/>
            <person name="Murakami K."/>
            <person name="Yasuda T."/>
            <person name="Iwayanagi T."/>
            <person name="Wagatsuma M."/>
            <person name="Shiratori A."/>
            <person name="Sudo H."/>
            <person name="Hosoiri T."/>
            <person name="Kaku Y."/>
            <person name="Kodaira H."/>
            <person name="Kondo H."/>
            <person name="Sugawara M."/>
            <person name="Takahashi M."/>
            <person name="Kanda K."/>
            <person name="Yokoi T."/>
            <person name="Furuya T."/>
            <person name="Kikkawa E."/>
            <person name="Omura Y."/>
            <person name="Abe K."/>
            <person name="Kamihara K."/>
            <person name="Katsuta N."/>
            <person name="Sato K."/>
            <person name="Tanikawa M."/>
            <person name="Yamazaki M."/>
            <person name="Ninomiya K."/>
            <person name="Ishibashi T."/>
            <person name="Yamashita H."/>
            <person name="Murakawa K."/>
            <person name="Fujimori K."/>
            <person name="Tanai H."/>
            <person name="Kimata M."/>
            <person name="Watanabe M."/>
            <person name="Hiraoka S."/>
            <person name="Chiba Y."/>
            <person name="Ishida S."/>
            <person name="Ono Y."/>
            <person name="Takiguchi S."/>
            <person name="Watanabe S."/>
            <person name="Yosida M."/>
            <person name="Hotuta T."/>
            <person name="Kusano J."/>
            <person name="Kanehori K."/>
            <person name="Takahashi-Fujii A."/>
            <person name="Hara H."/>
            <person name="Tanase T.-O."/>
            <person name="Nomura Y."/>
            <person name="Togiya S."/>
            <person name="Komai F."/>
            <person name="Hara R."/>
            <person name="Takeuchi K."/>
            <person name="Arita M."/>
            <person name="Imose N."/>
            <person name="Musashino K."/>
            <person name="Yuuki H."/>
            <person name="Oshima A."/>
            <person name="Sasaki N."/>
            <person name="Aotsuka S."/>
            <person name="Yoshikawa Y."/>
            <person name="Matsunawa H."/>
            <person name="Ichihara T."/>
            <person name="Shiohata N."/>
            <person name="Sano S."/>
            <person name="Moriya S."/>
            <person name="Momiyama H."/>
            <person name="Satoh N."/>
            <person name="Takami S."/>
            <person name="Terashima Y."/>
            <person name="Suzuki O."/>
            <person name="Nakagawa S."/>
            <person name="Senoh A."/>
            <person name="Mizoguchi H."/>
            <person name="Goto Y."/>
            <person name="Shimizu F."/>
            <person name="Wakebe H."/>
            <person name="Hishigaki H."/>
            <person name="Watanabe T."/>
            <person name="Sugiyama A."/>
            <person name="Takemoto M."/>
            <person name="Kawakami B."/>
            <person name="Yamazaki M."/>
            <person name="Watanabe K."/>
            <person name="Kumagai A."/>
            <person name="Itakura S."/>
            <person name="Fukuzumi Y."/>
            <person name="Fujimori Y."/>
            <person name="Komiyama M."/>
            <person name="Tashiro H."/>
            <person name="Tanigami A."/>
            <person name="Fujiwara T."/>
            <person name="Ono T."/>
            <person name="Yamada K."/>
            <person name="Fujii Y."/>
            <person name="Ozaki K."/>
            <person name="Hirao M."/>
            <person name="Ohmori Y."/>
            <person name="Kawabata A."/>
            <person name="Hikiji T."/>
            <person name="Kobatake N."/>
            <person name="Inagaki H."/>
            <person name="Ikema Y."/>
            <person name="Okamoto S."/>
            <person name="Okitani R."/>
            <person name="Kawakami T."/>
            <person name="Noguchi S."/>
            <person name="Itoh T."/>
            <person name="Shigeta K."/>
            <person name="Senba T."/>
            <person name="Matsumura K."/>
            <person name="Nakajima Y."/>
            <person name="Mizuno T."/>
            <person name="Morinaga M."/>
            <person name="Sasaki M."/>
            <person name="Togashi T."/>
            <person name="Oyama M."/>
            <person name="Hata H."/>
            <person name="Watanabe M."/>
            <person name="Komatsu T."/>
            <person name="Mizushima-Sugano J."/>
            <person name="Satoh T."/>
            <person name="Shirai Y."/>
            <person name="Takahashi Y."/>
            <person name="Nakagawa K."/>
            <person name="Okumura K."/>
            <person name="Nagase T."/>
            <person name="Nomura N."/>
            <person name="Kikuchi H."/>
            <person name="Masuho Y."/>
            <person name="Yamashita R."/>
            <person name="Nakai K."/>
            <person name="Yada T."/>
            <person name="Nakamura Y."/>
            <person name="Ohara O."/>
            <person name="Isogai T."/>
            <person name="Sugano S."/>
        </authorList>
    </citation>
    <scope>NUCLEOTIDE SEQUENCE [LARGE SCALE MRNA]</scope>
</reference>
<reference key="3">
    <citation type="journal article" date="2003" name="Science">
        <title>Human chromosome 7: DNA sequence and biology.</title>
        <authorList>
            <person name="Scherer S.W."/>
            <person name="Cheung J."/>
            <person name="MacDonald J.R."/>
            <person name="Osborne L.R."/>
            <person name="Nakabayashi K."/>
            <person name="Herbrick J.-A."/>
            <person name="Carson A.R."/>
            <person name="Parker-Katiraee L."/>
            <person name="Skaug J."/>
            <person name="Khaja R."/>
            <person name="Zhang J."/>
            <person name="Hudek A.K."/>
            <person name="Li M."/>
            <person name="Haddad M."/>
            <person name="Duggan G.E."/>
            <person name="Fernandez B.A."/>
            <person name="Kanematsu E."/>
            <person name="Gentles S."/>
            <person name="Christopoulos C.C."/>
            <person name="Choufani S."/>
            <person name="Kwasnicka D."/>
            <person name="Zheng X.H."/>
            <person name="Lai Z."/>
            <person name="Nusskern D.R."/>
            <person name="Zhang Q."/>
            <person name="Gu Z."/>
            <person name="Lu F."/>
            <person name="Zeesman S."/>
            <person name="Nowaczyk M.J."/>
            <person name="Teshima I."/>
            <person name="Chitayat D."/>
            <person name="Shuman C."/>
            <person name="Weksberg R."/>
            <person name="Zackai E.H."/>
            <person name="Grebe T.A."/>
            <person name="Cox S.R."/>
            <person name="Kirkpatrick S.J."/>
            <person name="Rahman N."/>
            <person name="Friedman J.M."/>
            <person name="Heng H.H.Q."/>
            <person name="Pelicci P.G."/>
            <person name="Lo-Coco F."/>
            <person name="Belloni E."/>
            <person name="Shaffer L.G."/>
            <person name="Pober B."/>
            <person name="Morton C.C."/>
            <person name="Gusella J.F."/>
            <person name="Bruns G.A.P."/>
            <person name="Korf B.R."/>
            <person name="Quade B.J."/>
            <person name="Ligon A.H."/>
            <person name="Ferguson H."/>
            <person name="Higgins A.W."/>
            <person name="Leach N.T."/>
            <person name="Herrick S.R."/>
            <person name="Lemyre E."/>
            <person name="Farra C.G."/>
            <person name="Kim H.-G."/>
            <person name="Summers A.M."/>
            <person name="Gripp K.W."/>
            <person name="Roberts W."/>
            <person name="Szatmari P."/>
            <person name="Winsor E.J.T."/>
            <person name="Grzeschik K.-H."/>
            <person name="Teebi A."/>
            <person name="Minassian B.A."/>
            <person name="Kere J."/>
            <person name="Armengol L."/>
            <person name="Pujana M.A."/>
            <person name="Estivill X."/>
            <person name="Wilson M.D."/>
            <person name="Koop B.F."/>
            <person name="Tosi S."/>
            <person name="Moore G.E."/>
            <person name="Boright A.P."/>
            <person name="Zlotorynski E."/>
            <person name="Kerem B."/>
            <person name="Kroisel P.M."/>
            <person name="Petek E."/>
            <person name="Oscier D.G."/>
            <person name="Mould S.J."/>
            <person name="Doehner H."/>
            <person name="Doehner K."/>
            <person name="Rommens J.M."/>
            <person name="Vincent J.B."/>
            <person name="Venter J.C."/>
            <person name="Li P.W."/>
            <person name="Mural R.J."/>
            <person name="Adams M.D."/>
            <person name="Tsui L.-C."/>
        </authorList>
    </citation>
    <scope>NUCLEOTIDE SEQUENCE [LARGE SCALE GENOMIC DNA]</scope>
</reference>
<reference key="4">
    <citation type="journal article" date="2004" name="Genome Res.">
        <title>The status, quality, and expansion of the NIH full-length cDNA project: the Mammalian Gene Collection (MGC).</title>
        <authorList>
            <consortium name="The MGC Project Team"/>
        </authorList>
    </citation>
    <scope>NUCLEOTIDE SEQUENCE [LARGE SCALE MRNA]</scope>
</reference>
<organism>
    <name type="scientific">Homo sapiens</name>
    <name type="common">Human</name>
    <dbReference type="NCBI Taxonomy" id="9606"/>
    <lineage>
        <taxon>Eukaryota</taxon>
        <taxon>Metazoa</taxon>
        <taxon>Chordata</taxon>
        <taxon>Craniata</taxon>
        <taxon>Vertebrata</taxon>
        <taxon>Euteleostomi</taxon>
        <taxon>Mammalia</taxon>
        <taxon>Eutheria</taxon>
        <taxon>Euarchontoglires</taxon>
        <taxon>Primates</taxon>
        <taxon>Haplorrhini</taxon>
        <taxon>Catarrhini</taxon>
        <taxon>Hominidae</taxon>
        <taxon>Homo</taxon>
    </lineage>
</organism>
<dbReference type="EMBL" id="AY358803">
    <property type="protein sequence ID" value="AAQ89163.1"/>
    <property type="molecule type" value="mRNA"/>
</dbReference>
<dbReference type="EMBL" id="AK290250">
    <property type="protein sequence ID" value="BAF82939.1"/>
    <property type="molecule type" value="mRNA"/>
</dbReference>
<dbReference type="EMBL" id="AK297754">
    <property type="protein sequence ID" value="BAG60104.1"/>
    <property type="molecule type" value="mRNA"/>
</dbReference>
<dbReference type="EMBL" id="CH236950">
    <property type="protein sequence ID" value="EAL24057.1"/>
    <property type="molecule type" value="Genomic_DNA"/>
</dbReference>
<dbReference type="EMBL" id="BC137311">
    <property type="protein sequence ID" value="AAI37312.1"/>
    <property type="molecule type" value="mRNA"/>
</dbReference>
<dbReference type="EMBL" id="BC137312">
    <property type="protein sequence ID" value="AAI37313.1"/>
    <property type="molecule type" value="mRNA"/>
</dbReference>
<dbReference type="CCDS" id="CCDS5841.1"/>
<dbReference type="RefSeq" id="NP_001356626.1">
    <property type="nucleotide sequence ID" value="NM_001369697.2"/>
</dbReference>
<dbReference type="RefSeq" id="NP_995327.1">
    <property type="nucleotide sequence ID" value="NM_205855.4"/>
</dbReference>
<dbReference type="RefSeq" id="XP_006716046.1">
    <property type="nucleotide sequence ID" value="XM_006715983.3"/>
</dbReference>
<dbReference type="SMR" id="Q6UWF9"/>
<dbReference type="STRING" id="9606.ENSP00000342336"/>
<dbReference type="PhosphoSitePlus" id="Q6UWF9"/>
<dbReference type="BioMuta" id="FAM180A"/>
<dbReference type="DMDM" id="74738086"/>
<dbReference type="jPOST" id="Q6UWF9"/>
<dbReference type="MassIVE" id="Q6UWF9"/>
<dbReference type="PaxDb" id="9606-ENSP00000342336"/>
<dbReference type="PeptideAtlas" id="Q6UWF9"/>
<dbReference type="ProteomicsDB" id="67477"/>
<dbReference type="Antibodypedia" id="18164">
    <property type="antibodies" value="12 antibodies from 9 providers"/>
</dbReference>
<dbReference type="DNASU" id="389558"/>
<dbReference type="Ensembl" id="ENST00000338588.8">
    <property type="protein sequence ID" value="ENSP00000342336.3"/>
    <property type="gene ID" value="ENSG00000189320.9"/>
</dbReference>
<dbReference type="Ensembl" id="ENST00000415751.1">
    <property type="protein sequence ID" value="ENSP00000395467.1"/>
    <property type="gene ID" value="ENSG00000189320.9"/>
</dbReference>
<dbReference type="Ensembl" id="ENST00000444083.5">
    <property type="protein sequence ID" value="ENSP00000406553.1"/>
    <property type="gene ID" value="ENSG00000189320.9"/>
</dbReference>
<dbReference type="GeneID" id="389558"/>
<dbReference type="KEGG" id="hsa:389558"/>
<dbReference type="MANE-Select" id="ENST00000338588.8">
    <property type="protein sequence ID" value="ENSP00000342336.3"/>
    <property type="RefSeq nucleotide sequence ID" value="NM_205855.4"/>
    <property type="RefSeq protein sequence ID" value="NP_995327.1"/>
</dbReference>
<dbReference type="UCSC" id="uc003vtd.4">
    <property type="organism name" value="human"/>
</dbReference>
<dbReference type="AGR" id="HGNC:33773"/>
<dbReference type="CTD" id="389558"/>
<dbReference type="DisGeNET" id="389558"/>
<dbReference type="GeneCards" id="FAM180A"/>
<dbReference type="HGNC" id="HGNC:33773">
    <property type="gene designation" value="FAM180A"/>
</dbReference>
<dbReference type="HPA" id="ENSG00000189320">
    <property type="expression patterns" value="Tissue enhanced (gallbladder, heart muscle)"/>
</dbReference>
<dbReference type="neXtProt" id="NX_Q6UWF9"/>
<dbReference type="OpenTargets" id="ENSG00000189320"/>
<dbReference type="PharmGKB" id="PA162387559"/>
<dbReference type="VEuPathDB" id="HostDB:ENSG00000189320"/>
<dbReference type="eggNOG" id="ENOG502S335">
    <property type="taxonomic scope" value="Eukaryota"/>
</dbReference>
<dbReference type="GeneTree" id="ENSGT00940000154479"/>
<dbReference type="HOGENOM" id="CLU_105099_0_0_1"/>
<dbReference type="InParanoid" id="Q6UWF9"/>
<dbReference type="OMA" id="QKDVWAQ"/>
<dbReference type="OrthoDB" id="8913792at2759"/>
<dbReference type="PAN-GO" id="Q6UWF9">
    <property type="GO annotations" value="0 GO annotations based on evolutionary models"/>
</dbReference>
<dbReference type="PhylomeDB" id="Q6UWF9"/>
<dbReference type="TreeFam" id="TF333387"/>
<dbReference type="PathwayCommons" id="Q6UWF9"/>
<dbReference type="BioGRID-ORCS" id="389558">
    <property type="hits" value="7 hits in 1142 CRISPR screens"/>
</dbReference>
<dbReference type="GenomeRNAi" id="389558"/>
<dbReference type="Pharos" id="Q6UWF9">
    <property type="development level" value="Tdark"/>
</dbReference>
<dbReference type="PRO" id="PR:Q6UWF9"/>
<dbReference type="Proteomes" id="UP000005640">
    <property type="component" value="Chromosome 7"/>
</dbReference>
<dbReference type="RNAct" id="Q6UWF9">
    <property type="molecule type" value="protein"/>
</dbReference>
<dbReference type="Bgee" id="ENSG00000189320">
    <property type="expression patterns" value="Expressed in ascending aorta and 86 other cell types or tissues"/>
</dbReference>
<dbReference type="GO" id="GO:0005576">
    <property type="term" value="C:extracellular region"/>
    <property type="evidence" value="ECO:0007669"/>
    <property type="project" value="UniProtKB-SubCell"/>
</dbReference>
<dbReference type="InterPro" id="IPR029170">
    <property type="entry name" value="FAM180"/>
</dbReference>
<dbReference type="PANTHER" id="PTHR34034:SF2">
    <property type="entry name" value="PROTEIN FAM180A"/>
    <property type="match status" value="1"/>
</dbReference>
<dbReference type="PANTHER" id="PTHR34034">
    <property type="entry name" value="PROTEIN FAM180A-RELATED"/>
    <property type="match status" value="1"/>
</dbReference>
<dbReference type="Pfam" id="PF15173">
    <property type="entry name" value="FAM180"/>
    <property type="match status" value="1"/>
</dbReference>
<comment type="subcellular location">
    <subcellularLocation>
        <location evidence="2">Secreted</location>
    </subcellularLocation>
</comment>
<comment type="similarity">
    <text evidence="2">Belongs to the FAM180 family.</text>
</comment>
<proteinExistence type="evidence at protein level"/>
<accession>Q6UWF9</accession>
<accession>B2RP85</accession>
<evidence type="ECO:0000255" key="1"/>
<evidence type="ECO:0000305" key="2"/>